<keyword id="KW-0687">Ribonucleoprotein</keyword>
<keyword id="KW-0689">Ribosomal protein</keyword>
<keyword id="KW-0694">RNA-binding</keyword>
<keyword id="KW-0699">rRNA-binding</keyword>
<feature type="chain" id="PRO_1000052215" description="Large ribosomal subunit protein uL24">
    <location>
        <begin position="1"/>
        <end position="105"/>
    </location>
</feature>
<sequence>MNRLKKGDDVIVIAGKDKGRRGVVKSFAKGGSLVLVEGINIVKKHIKPNPNRGIEDGVVEKELPVDASNVAIFNPATEKADRVGYKFVDEKKVRYFKSNGELVDL</sequence>
<reference key="1">
    <citation type="journal article" date="2007" name="PLoS ONE">
        <title>Genome sequencing shows that European isolates of Francisella tularensis subspecies tularensis are almost identical to US laboratory strain Schu S4.</title>
        <authorList>
            <person name="Chaudhuri R.R."/>
            <person name="Ren C.-P."/>
            <person name="Desmond L."/>
            <person name="Vincent G.A."/>
            <person name="Silman N.J."/>
            <person name="Brehm J.K."/>
            <person name="Elmore M.J."/>
            <person name="Hudson M.J."/>
            <person name="Forsman M."/>
            <person name="Isherwood K.E."/>
            <person name="Gurycova D."/>
            <person name="Minton N.P."/>
            <person name="Titball R.W."/>
            <person name="Pallen M.J."/>
            <person name="Vipond R."/>
        </authorList>
    </citation>
    <scope>NUCLEOTIDE SEQUENCE [LARGE SCALE GENOMIC DNA]</scope>
    <source>
        <strain>FSC 198</strain>
    </source>
</reference>
<dbReference type="EMBL" id="AM286280">
    <property type="protein sequence ID" value="CAL08352.1"/>
    <property type="molecule type" value="Genomic_DNA"/>
</dbReference>
<dbReference type="RefSeq" id="WP_003021594.1">
    <property type="nucleotide sequence ID" value="NC_008245.1"/>
</dbReference>
<dbReference type="SMR" id="Q14JA9"/>
<dbReference type="KEGG" id="ftf:FTF0336"/>
<dbReference type="HOGENOM" id="CLU_093315_2_2_6"/>
<dbReference type="GO" id="GO:1990904">
    <property type="term" value="C:ribonucleoprotein complex"/>
    <property type="evidence" value="ECO:0007669"/>
    <property type="project" value="UniProtKB-KW"/>
</dbReference>
<dbReference type="GO" id="GO:0005840">
    <property type="term" value="C:ribosome"/>
    <property type="evidence" value="ECO:0007669"/>
    <property type="project" value="UniProtKB-KW"/>
</dbReference>
<dbReference type="GO" id="GO:0019843">
    <property type="term" value="F:rRNA binding"/>
    <property type="evidence" value="ECO:0007669"/>
    <property type="project" value="UniProtKB-UniRule"/>
</dbReference>
<dbReference type="GO" id="GO:0003735">
    <property type="term" value="F:structural constituent of ribosome"/>
    <property type="evidence" value="ECO:0007669"/>
    <property type="project" value="InterPro"/>
</dbReference>
<dbReference type="GO" id="GO:0006412">
    <property type="term" value="P:translation"/>
    <property type="evidence" value="ECO:0007669"/>
    <property type="project" value="UniProtKB-UniRule"/>
</dbReference>
<dbReference type="CDD" id="cd06089">
    <property type="entry name" value="KOW_RPL26"/>
    <property type="match status" value="1"/>
</dbReference>
<dbReference type="FunFam" id="2.30.30.30:FF:000004">
    <property type="entry name" value="50S ribosomal protein L24"/>
    <property type="match status" value="1"/>
</dbReference>
<dbReference type="Gene3D" id="2.30.30.30">
    <property type="match status" value="1"/>
</dbReference>
<dbReference type="HAMAP" id="MF_01326_B">
    <property type="entry name" value="Ribosomal_uL24_B"/>
    <property type="match status" value="1"/>
</dbReference>
<dbReference type="InterPro" id="IPR005824">
    <property type="entry name" value="KOW"/>
</dbReference>
<dbReference type="InterPro" id="IPR014722">
    <property type="entry name" value="Rib_uL2_dom2"/>
</dbReference>
<dbReference type="InterPro" id="IPR003256">
    <property type="entry name" value="Ribosomal_uL24"/>
</dbReference>
<dbReference type="InterPro" id="IPR005825">
    <property type="entry name" value="Ribosomal_uL24_CS"/>
</dbReference>
<dbReference type="InterPro" id="IPR041988">
    <property type="entry name" value="Ribosomal_uL24_KOW"/>
</dbReference>
<dbReference type="InterPro" id="IPR008991">
    <property type="entry name" value="Translation_prot_SH3-like_sf"/>
</dbReference>
<dbReference type="NCBIfam" id="TIGR01079">
    <property type="entry name" value="rplX_bact"/>
    <property type="match status" value="1"/>
</dbReference>
<dbReference type="PANTHER" id="PTHR12903">
    <property type="entry name" value="MITOCHONDRIAL RIBOSOMAL PROTEIN L24"/>
    <property type="match status" value="1"/>
</dbReference>
<dbReference type="Pfam" id="PF00467">
    <property type="entry name" value="KOW"/>
    <property type="match status" value="1"/>
</dbReference>
<dbReference type="Pfam" id="PF17136">
    <property type="entry name" value="ribosomal_L24"/>
    <property type="match status" value="1"/>
</dbReference>
<dbReference type="SUPFAM" id="SSF50104">
    <property type="entry name" value="Translation proteins SH3-like domain"/>
    <property type="match status" value="1"/>
</dbReference>
<dbReference type="PROSITE" id="PS01108">
    <property type="entry name" value="RIBOSOMAL_L24"/>
    <property type="match status" value="1"/>
</dbReference>
<accession>Q14JA9</accession>
<proteinExistence type="inferred from homology"/>
<evidence type="ECO:0000255" key="1">
    <source>
        <dbReference type="HAMAP-Rule" id="MF_01326"/>
    </source>
</evidence>
<evidence type="ECO:0000305" key="2"/>
<organism>
    <name type="scientific">Francisella tularensis subsp. tularensis (strain FSC 198)</name>
    <dbReference type="NCBI Taxonomy" id="393115"/>
    <lineage>
        <taxon>Bacteria</taxon>
        <taxon>Pseudomonadati</taxon>
        <taxon>Pseudomonadota</taxon>
        <taxon>Gammaproteobacteria</taxon>
        <taxon>Thiotrichales</taxon>
        <taxon>Francisellaceae</taxon>
        <taxon>Francisella</taxon>
    </lineage>
</organism>
<comment type="function">
    <text evidence="1">One of two assembly initiator proteins, it binds directly to the 5'-end of the 23S rRNA, where it nucleates assembly of the 50S subunit.</text>
</comment>
<comment type="function">
    <text evidence="1">One of the proteins that surrounds the polypeptide exit tunnel on the outside of the subunit.</text>
</comment>
<comment type="subunit">
    <text evidence="1">Part of the 50S ribosomal subunit.</text>
</comment>
<comment type="similarity">
    <text evidence="1">Belongs to the universal ribosomal protein uL24 family.</text>
</comment>
<gene>
    <name evidence="1" type="primary">rplX</name>
    <name type="ordered locus">FTF0336</name>
</gene>
<protein>
    <recommendedName>
        <fullName evidence="1">Large ribosomal subunit protein uL24</fullName>
    </recommendedName>
    <alternativeName>
        <fullName evidence="2">50S ribosomal protein L24</fullName>
    </alternativeName>
</protein>
<name>RL24_FRAT1</name>